<reference key="1">
    <citation type="submission" date="2007-02" db="EMBL/GenBank/DDBJ databases">
        <title>Complete sequence of chromosome of Shewanella baltica OS155.</title>
        <authorList>
            <consortium name="US DOE Joint Genome Institute"/>
            <person name="Copeland A."/>
            <person name="Lucas S."/>
            <person name="Lapidus A."/>
            <person name="Barry K."/>
            <person name="Detter J.C."/>
            <person name="Glavina del Rio T."/>
            <person name="Hammon N."/>
            <person name="Israni S."/>
            <person name="Dalin E."/>
            <person name="Tice H."/>
            <person name="Pitluck S."/>
            <person name="Sims D.R."/>
            <person name="Brettin T."/>
            <person name="Bruce D."/>
            <person name="Han C."/>
            <person name="Tapia R."/>
            <person name="Brainard J."/>
            <person name="Schmutz J."/>
            <person name="Larimer F."/>
            <person name="Land M."/>
            <person name="Hauser L."/>
            <person name="Kyrpides N."/>
            <person name="Mikhailova N."/>
            <person name="Brettar I."/>
            <person name="Klappenbach J."/>
            <person name="Konstantinidis K."/>
            <person name="Rodrigues J."/>
            <person name="Tiedje J."/>
            <person name="Richardson P."/>
        </authorList>
    </citation>
    <scope>NUCLEOTIDE SEQUENCE [LARGE SCALE GENOMIC DNA]</scope>
    <source>
        <strain>OS155 / ATCC BAA-1091</strain>
    </source>
</reference>
<dbReference type="EC" id="6.1.1.5" evidence="1"/>
<dbReference type="EMBL" id="CP000563">
    <property type="protein sequence ID" value="ABN60578.1"/>
    <property type="molecule type" value="Genomic_DNA"/>
</dbReference>
<dbReference type="RefSeq" id="WP_011846080.1">
    <property type="nucleotide sequence ID" value="NC_009052.1"/>
</dbReference>
<dbReference type="SMR" id="A3D1G5"/>
<dbReference type="STRING" id="325240.Sbal_1054"/>
<dbReference type="KEGG" id="sbl:Sbal_1054"/>
<dbReference type="HOGENOM" id="CLU_001493_7_1_6"/>
<dbReference type="OrthoDB" id="9810365at2"/>
<dbReference type="Proteomes" id="UP000001557">
    <property type="component" value="Chromosome"/>
</dbReference>
<dbReference type="GO" id="GO:0005829">
    <property type="term" value="C:cytosol"/>
    <property type="evidence" value="ECO:0007669"/>
    <property type="project" value="TreeGrafter"/>
</dbReference>
<dbReference type="GO" id="GO:0002161">
    <property type="term" value="F:aminoacyl-tRNA deacylase activity"/>
    <property type="evidence" value="ECO:0007669"/>
    <property type="project" value="InterPro"/>
</dbReference>
<dbReference type="GO" id="GO:0005524">
    <property type="term" value="F:ATP binding"/>
    <property type="evidence" value="ECO:0007669"/>
    <property type="project" value="UniProtKB-UniRule"/>
</dbReference>
<dbReference type="GO" id="GO:0004822">
    <property type="term" value="F:isoleucine-tRNA ligase activity"/>
    <property type="evidence" value="ECO:0007669"/>
    <property type="project" value="UniProtKB-UniRule"/>
</dbReference>
<dbReference type="GO" id="GO:0000049">
    <property type="term" value="F:tRNA binding"/>
    <property type="evidence" value="ECO:0007669"/>
    <property type="project" value="InterPro"/>
</dbReference>
<dbReference type="GO" id="GO:0008270">
    <property type="term" value="F:zinc ion binding"/>
    <property type="evidence" value="ECO:0007669"/>
    <property type="project" value="UniProtKB-UniRule"/>
</dbReference>
<dbReference type="GO" id="GO:0006428">
    <property type="term" value="P:isoleucyl-tRNA aminoacylation"/>
    <property type="evidence" value="ECO:0007669"/>
    <property type="project" value="UniProtKB-UniRule"/>
</dbReference>
<dbReference type="CDD" id="cd07960">
    <property type="entry name" value="Anticodon_Ia_Ile_BEm"/>
    <property type="match status" value="1"/>
</dbReference>
<dbReference type="CDD" id="cd00818">
    <property type="entry name" value="IleRS_core"/>
    <property type="match status" value="1"/>
</dbReference>
<dbReference type="FunFam" id="1.10.730.20:FF:000001">
    <property type="entry name" value="Isoleucine--tRNA ligase"/>
    <property type="match status" value="1"/>
</dbReference>
<dbReference type="FunFam" id="3.40.50.620:FF:000042">
    <property type="entry name" value="Isoleucine--tRNA ligase"/>
    <property type="match status" value="1"/>
</dbReference>
<dbReference type="FunFam" id="3.40.50.620:FF:000048">
    <property type="entry name" value="Isoleucine--tRNA ligase"/>
    <property type="match status" value="1"/>
</dbReference>
<dbReference type="Gene3D" id="1.10.730.20">
    <property type="match status" value="1"/>
</dbReference>
<dbReference type="Gene3D" id="3.40.50.620">
    <property type="entry name" value="HUPs"/>
    <property type="match status" value="2"/>
</dbReference>
<dbReference type="HAMAP" id="MF_02002">
    <property type="entry name" value="Ile_tRNA_synth_type1"/>
    <property type="match status" value="1"/>
</dbReference>
<dbReference type="InterPro" id="IPR001412">
    <property type="entry name" value="aa-tRNA-synth_I_CS"/>
</dbReference>
<dbReference type="InterPro" id="IPR002300">
    <property type="entry name" value="aa-tRNA-synth_Ia"/>
</dbReference>
<dbReference type="InterPro" id="IPR033708">
    <property type="entry name" value="Anticodon_Ile_BEm"/>
</dbReference>
<dbReference type="InterPro" id="IPR002301">
    <property type="entry name" value="Ile-tRNA-ligase"/>
</dbReference>
<dbReference type="InterPro" id="IPR023585">
    <property type="entry name" value="Ile-tRNA-ligase_type1"/>
</dbReference>
<dbReference type="InterPro" id="IPR050081">
    <property type="entry name" value="Ile-tRNA_ligase"/>
</dbReference>
<dbReference type="InterPro" id="IPR013155">
    <property type="entry name" value="M/V/L/I-tRNA-synth_anticd-bd"/>
</dbReference>
<dbReference type="InterPro" id="IPR014729">
    <property type="entry name" value="Rossmann-like_a/b/a_fold"/>
</dbReference>
<dbReference type="InterPro" id="IPR009080">
    <property type="entry name" value="tRNAsynth_Ia_anticodon-bd"/>
</dbReference>
<dbReference type="InterPro" id="IPR009008">
    <property type="entry name" value="Val/Leu/Ile-tRNA-synth_edit"/>
</dbReference>
<dbReference type="InterPro" id="IPR010663">
    <property type="entry name" value="Znf_FPG/IleRS"/>
</dbReference>
<dbReference type="NCBIfam" id="TIGR00392">
    <property type="entry name" value="ileS"/>
    <property type="match status" value="1"/>
</dbReference>
<dbReference type="PANTHER" id="PTHR42765:SF1">
    <property type="entry name" value="ISOLEUCINE--TRNA LIGASE, MITOCHONDRIAL"/>
    <property type="match status" value="1"/>
</dbReference>
<dbReference type="PANTHER" id="PTHR42765">
    <property type="entry name" value="SOLEUCYL-TRNA SYNTHETASE"/>
    <property type="match status" value="1"/>
</dbReference>
<dbReference type="Pfam" id="PF08264">
    <property type="entry name" value="Anticodon_1"/>
    <property type="match status" value="1"/>
</dbReference>
<dbReference type="Pfam" id="PF00133">
    <property type="entry name" value="tRNA-synt_1"/>
    <property type="match status" value="1"/>
</dbReference>
<dbReference type="Pfam" id="PF06827">
    <property type="entry name" value="zf-FPG_IleRS"/>
    <property type="match status" value="1"/>
</dbReference>
<dbReference type="PRINTS" id="PR00984">
    <property type="entry name" value="TRNASYNTHILE"/>
</dbReference>
<dbReference type="SUPFAM" id="SSF47323">
    <property type="entry name" value="Anticodon-binding domain of a subclass of class I aminoacyl-tRNA synthetases"/>
    <property type="match status" value="1"/>
</dbReference>
<dbReference type="SUPFAM" id="SSF52374">
    <property type="entry name" value="Nucleotidylyl transferase"/>
    <property type="match status" value="1"/>
</dbReference>
<dbReference type="SUPFAM" id="SSF50677">
    <property type="entry name" value="ValRS/IleRS/LeuRS editing domain"/>
    <property type="match status" value="1"/>
</dbReference>
<dbReference type="PROSITE" id="PS00178">
    <property type="entry name" value="AA_TRNA_LIGASE_I"/>
    <property type="match status" value="1"/>
</dbReference>
<name>SYI_SHEB5</name>
<gene>
    <name evidence="1" type="primary">ileS</name>
    <name type="ordered locus">Sbal_1054</name>
</gene>
<evidence type="ECO:0000255" key="1">
    <source>
        <dbReference type="HAMAP-Rule" id="MF_02002"/>
    </source>
</evidence>
<comment type="function">
    <text evidence="1">Catalyzes the attachment of isoleucine to tRNA(Ile). As IleRS can inadvertently accommodate and process structurally similar amino acids such as valine, to avoid such errors it has two additional distinct tRNA(Ile)-dependent editing activities. One activity is designated as 'pretransfer' editing and involves the hydrolysis of activated Val-AMP. The other activity is designated 'posttransfer' editing and involves deacylation of mischarged Val-tRNA(Ile).</text>
</comment>
<comment type="catalytic activity">
    <reaction evidence="1">
        <text>tRNA(Ile) + L-isoleucine + ATP = L-isoleucyl-tRNA(Ile) + AMP + diphosphate</text>
        <dbReference type="Rhea" id="RHEA:11060"/>
        <dbReference type="Rhea" id="RHEA-COMP:9666"/>
        <dbReference type="Rhea" id="RHEA-COMP:9695"/>
        <dbReference type="ChEBI" id="CHEBI:30616"/>
        <dbReference type="ChEBI" id="CHEBI:33019"/>
        <dbReference type="ChEBI" id="CHEBI:58045"/>
        <dbReference type="ChEBI" id="CHEBI:78442"/>
        <dbReference type="ChEBI" id="CHEBI:78528"/>
        <dbReference type="ChEBI" id="CHEBI:456215"/>
        <dbReference type="EC" id="6.1.1.5"/>
    </reaction>
</comment>
<comment type="cofactor">
    <cofactor evidence="1">
        <name>Zn(2+)</name>
        <dbReference type="ChEBI" id="CHEBI:29105"/>
    </cofactor>
    <text evidence="1">Binds 1 zinc ion per subunit.</text>
</comment>
<comment type="subunit">
    <text evidence="1">Monomer.</text>
</comment>
<comment type="subcellular location">
    <subcellularLocation>
        <location evidence="1">Cytoplasm</location>
    </subcellularLocation>
</comment>
<comment type="domain">
    <text evidence="1">IleRS has two distinct active sites: one for aminoacylation and one for editing. The misactivated valine is translocated from the active site to the editing site, which sterically excludes the correctly activated isoleucine. The single editing site contains two valyl binding pockets, one specific for each substrate (Val-AMP or Val-tRNA(Ile)).</text>
</comment>
<comment type="similarity">
    <text evidence="1">Belongs to the class-I aminoacyl-tRNA synthetase family. IleS type 1 subfamily.</text>
</comment>
<feature type="chain" id="PRO_1000022116" description="Isoleucine--tRNA ligase">
    <location>
        <begin position="1"/>
        <end position="940"/>
    </location>
</feature>
<feature type="short sequence motif" description="'HIGH' region">
    <location>
        <begin position="58"/>
        <end position="68"/>
    </location>
</feature>
<feature type="short sequence motif" description="'KMSKS' region">
    <location>
        <begin position="605"/>
        <end position="609"/>
    </location>
</feature>
<feature type="binding site" evidence="1">
    <location>
        <position position="564"/>
    </location>
    <ligand>
        <name>L-isoleucyl-5'-AMP</name>
        <dbReference type="ChEBI" id="CHEBI:178002"/>
    </ligand>
</feature>
<feature type="binding site" evidence="1">
    <location>
        <position position="608"/>
    </location>
    <ligand>
        <name>ATP</name>
        <dbReference type="ChEBI" id="CHEBI:30616"/>
    </ligand>
</feature>
<feature type="binding site" evidence="1">
    <location>
        <position position="903"/>
    </location>
    <ligand>
        <name>Zn(2+)</name>
        <dbReference type="ChEBI" id="CHEBI:29105"/>
    </ligand>
</feature>
<feature type="binding site" evidence="1">
    <location>
        <position position="906"/>
    </location>
    <ligand>
        <name>Zn(2+)</name>
        <dbReference type="ChEBI" id="CHEBI:29105"/>
    </ligand>
</feature>
<feature type="binding site" evidence="1">
    <location>
        <position position="923"/>
    </location>
    <ligand>
        <name>Zn(2+)</name>
        <dbReference type="ChEBI" id="CHEBI:29105"/>
    </ligand>
</feature>
<feature type="binding site" evidence="1">
    <location>
        <position position="926"/>
    </location>
    <ligand>
        <name>Zn(2+)</name>
        <dbReference type="ChEBI" id="CHEBI:29105"/>
    </ligand>
</feature>
<proteinExistence type="inferred from homology"/>
<organism>
    <name type="scientific">Shewanella baltica (strain OS155 / ATCC BAA-1091)</name>
    <dbReference type="NCBI Taxonomy" id="325240"/>
    <lineage>
        <taxon>Bacteria</taxon>
        <taxon>Pseudomonadati</taxon>
        <taxon>Pseudomonadota</taxon>
        <taxon>Gammaproteobacteria</taxon>
        <taxon>Alteromonadales</taxon>
        <taxon>Shewanellaceae</taxon>
        <taxon>Shewanella</taxon>
    </lineage>
</organism>
<keyword id="KW-0030">Aminoacyl-tRNA synthetase</keyword>
<keyword id="KW-0067">ATP-binding</keyword>
<keyword id="KW-0963">Cytoplasm</keyword>
<keyword id="KW-0436">Ligase</keyword>
<keyword id="KW-0479">Metal-binding</keyword>
<keyword id="KW-0547">Nucleotide-binding</keyword>
<keyword id="KW-0648">Protein biosynthesis</keyword>
<keyword id="KW-1185">Reference proteome</keyword>
<keyword id="KW-0862">Zinc</keyword>
<accession>A3D1G5</accession>
<sequence>MSDYKFTLNLPETEFPMRGNLANREPEMLERWTKDGLYQQIRDSRIGRTPFILHDGPPYANGSIHIGHSVNKILKDIIVKSKTMSGFDAPYVPGWDCHGLPIELKVEQKVGKPGQKISAAEFREECRKYAAEQVNGQREDFIRLGVLGDWQNPYLTMDFSTEANIVRSLSKVIESGHLHKGVKPVHWCTDCGSALAEAEVEYEDKTSPAIDVAFVAADSKAVAAKFGVSDYSHPVSMVIWTTTPWTLPANRALSLSPELDYSLVEFEKDGVTQALILAEVLVESCLTRYNVESHTVLGSAKGAAFELVRFNHPFLDFDVPAILGDHVTTDAGTGIVHTAPGHGQDDFVVGQKYGLEVANPVGDNGVYKPDTEYFAGQHVFKANDNVVALLREKSALLNHVAYRHSYPHCWRHKTPIIFRATPQWFISMDNHGLRTQALKEIEQTQWIPDWGQSRIEKMVENRPDWCISRQRTWGVPITLFVNRETEELHPDSVSLMERVASRIEQQGIQAWWDLDAAELLGDEAEQYRKVTDTLDVWFDSGSTFSSVVAARPEFHGHGVDLYLEGSDQHRGWFMSSLMISTAMNGKAPYKQVLTHGFTVDGKGRKMSKSIGNVIAPQTVTNKLGADILRLWVAATDYSGEMTVSDEILNRSADAYRRIRNTARFLLANLNGFEPAKDLVAVEDMVALDRWVVRRAAALQQEIIEAYEQYNFHIVTQKLMQFCSVELGSFYLDIIKDRQYTAKQEGHARRSCQSALYLISEAMVRWIAPILSFTADEVWQLLPGERDAYVFTQEWYQGLKSVTLATDLSDDYWQQLLTVRNEVNKVIEQARRDKRIGGSLEAEVTLFADAALTEQLTHIGDELRFVLLTSEAKVLPLADATSEAVETELASLKLLVASSTAEKCERCWHHREEVGTIEAHPTLCTRCVTNIEGDGEVRLFA</sequence>
<protein>
    <recommendedName>
        <fullName evidence="1">Isoleucine--tRNA ligase</fullName>
        <ecNumber evidence="1">6.1.1.5</ecNumber>
    </recommendedName>
    <alternativeName>
        <fullName evidence="1">Isoleucyl-tRNA synthetase</fullName>
        <shortName evidence="1">IleRS</shortName>
    </alternativeName>
</protein>